<feature type="chain" id="PRO_0000309912" description="Large ribosomal subunit protein uL2">
    <location>
        <begin position="1"/>
        <end position="278"/>
    </location>
</feature>
<feature type="region of interest" description="Disordered" evidence="2">
    <location>
        <begin position="29"/>
        <end position="53"/>
    </location>
</feature>
<feature type="region of interest" description="Disordered" evidence="2">
    <location>
        <begin position="221"/>
        <end position="278"/>
    </location>
</feature>
<feature type="compositionally biased region" description="Basic residues" evidence="2">
    <location>
        <begin position="269"/>
        <end position="278"/>
    </location>
</feature>
<proteinExistence type="inferred from homology"/>
<comment type="function">
    <text evidence="1">One of the primary rRNA binding proteins. Required for association of the 30S and 50S subunits to form the 70S ribosome, for tRNA binding and peptide bond formation. It has been suggested to have peptidyltransferase activity; this is somewhat controversial. Makes several contacts with the 16S rRNA in the 70S ribosome.</text>
</comment>
<comment type="subunit">
    <text evidence="1">Part of the 50S ribosomal subunit. Forms a bridge to the 30S subunit in the 70S ribosome.</text>
</comment>
<comment type="similarity">
    <text evidence="1">Belongs to the universal ribosomal protein uL2 family.</text>
</comment>
<gene>
    <name evidence="1" type="primary">rplB</name>
    <name type="ordered locus">ELI_08175</name>
</gene>
<evidence type="ECO:0000255" key="1">
    <source>
        <dbReference type="HAMAP-Rule" id="MF_01320"/>
    </source>
</evidence>
<evidence type="ECO:0000256" key="2">
    <source>
        <dbReference type="SAM" id="MobiDB-lite"/>
    </source>
</evidence>
<evidence type="ECO:0000305" key="3"/>
<organism>
    <name type="scientific">Erythrobacter litoralis (strain HTCC2594)</name>
    <dbReference type="NCBI Taxonomy" id="314225"/>
    <lineage>
        <taxon>Bacteria</taxon>
        <taxon>Pseudomonadati</taxon>
        <taxon>Pseudomonadota</taxon>
        <taxon>Alphaproteobacteria</taxon>
        <taxon>Sphingomonadales</taxon>
        <taxon>Erythrobacteraceae</taxon>
        <taxon>Erythrobacter/Porphyrobacter group</taxon>
        <taxon>Erythrobacter</taxon>
    </lineage>
</organism>
<dbReference type="EMBL" id="CP000157">
    <property type="protein sequence ID" value="ABC63727.1"/>
    <property type="molecule type" value="Genomic_DNA"/>
</dbReference>
<dbReference type="RefSeq" id="WP_011414559.1">
    <property type="nucleotide sequence ID" value="NC_007722.1"/>
</dbReference>
<dbReference type="SMR" id="Q2N9B4"/>
<dbReference type="STRING" id="314225.ELI_08175"/>
<dbReference type="KEGG" id="eli:ELI_08175"/>
<dbReference type="eggNOG" id="COG0090">
    <property type="taxonomic scope" value="Bacteria"/>
</dbReference>
<dbReference type="HOGENOM" id="CLU_036235_2_1_5"/>
<dbReference type="OrthoDB" id="9778722at2"/>
<dbReference type="Proteomes" id="UP000008808">
    <property type="component" value="Chromosome"/>
</dbReference>
<dbReference type="GO" id="GO:0015934">
    <property type="term" value="C:large ribosomal subunit"/>
    <property type="evidence" value="ECO:0007669"/>
    <property type="project" value="InterPro"/>
</dbReference>
<dbReference type="GO" id="GO:0019843">
    <property type="term" value="F:rRNA binding"/>
    <property type="evidence" value="ECO:0007669"/>
    <property type="project" value="UniProtKB-UniRule"/>
</dbReference>
<dbReference type="GO" id="GO:0003735">
    <property type="term" value="F:structural constituent of ribosome"/>
    <property type="evidence" value="ECO:0007669"/>
    <property type="project" value="InterPro"/>
</dbReference>
<dbReference type="GO" id="GO:0016740">
    <property type="term" value="F:transferase activity"/>
    <property type="evidence" value="ECO:0007669"/>
    <property type="project" value="InterPro"/>
</dbReference>
<dbReference type="GO" id="GO:0002181">
    <property type="term" value="P:cytoplasmic translation"/>
    <property type="evidence" value="ECO:0007669"/>
    <property type="project" value="TreeGrafter"/>
</dbReference>
<dbReference type="FunFam" id="2.30.30.30:FF:000001">
    <property type="entry name" value="50S ribosomal protein L2"/>
    <property type="match status" value="1"/>
</dbReference>
<dbReference type="FunFam" id="2.40.50.140:FF:000003">
    <property type="entry name" value="50S ribosomal protein L2"/>
    <property type="match status" value="1"/>
</dbReference>
<dbReference type="FunFam" id="4.10.950.10:FF:000001">
    <property type="entry name" value="50S ribosomal protein L2"/>
    <property type="match status" value="1"/>
</dbReference>
<dbReference type="Gene3D" id="2.30.30.30">
    <property type="match status" value="1"/>
</dbReference>
<dbReference type="Gene3D" id="2.40.50.140">
    <property type="entry name" value="Nucleic acid-binding proteins"/>
    <property type="match status" value="1"/>
</dbReference>
<dbReference type="Gene3D" id="4.10.950.10">
    <property type="entry name" value="Ribosomal protein L2, domain 3"/>
    <property type="match status" value="1"/>
</dbReference>
<dbReference type="HAMAP" id="MF_01320_B">
    <property type="entry name" value="Ribosomal_uL2_B"/>
    <property type="match status" value="1"/>
</dbReference>
<dbReference type="InterPro" id="IPR012340">
    <property type="entry name" value="NA-bd_OB-fold"/>
</dbReference>
<dbReference type="InterPro" id="IPR014722">
    <property type="entry name" value="Rib_uL2_dom2"/>
</dbReference>
<dbReference type="InterPro" id="IPR002171">
    <property type="entry name" value="Ribosomal_uL2"/>
</dbReference>
<dbReference type="InterPro" id="IPR005880">
    <property type="entry name" value="Ribosomal_uL2_bac/org-type"/>
</dbReference>
<dbReference type="InterPro" id="IPR022669">
    <property type="entry name" value="Ribosomal_uL2_C"/>
</dbReference>
<dbReference type="InterPro" id="IPR022671">
    <property type="entry name" value="Ribosomal_uL2_CS"/>
</dbReference>
<dbReference type="InterPro" id="IPR014726">
    <property type="entry name" value="Ribosomal_uL2_dom3"/>
</dbReference>
<dbReference type="InterPro" id="IPR022666">
    <property type="entry name" value="Ribosomal_uL2_RNA-bd_dom"/>
</dbReference>
<dbReference type="InterPro" id="IPR008991">
    <property type="entry name" value="Translation_prot_SH3-like_sf"/>
</dbReference>
<dbReference type="NCBIfam" id="TIGR01171">
    <property type="entry name" value="rplB_bact"/>
    <property type="match status" value="1"/>
</dbReference>
<dbReference type="PANTHER" id="PTHR13691:SF5">
    <property type="entry name" value="LARGE RIBOSOMAL SUBUNIT PROTEIN UL2M"/>
    <property type="match status" value="1"/>
</dbReference>
<dbReference type="PANTHER" id="PTHR13691">
    <property type="entry name" value="RIBOSOMAL PROTEIN L2"/>
    <property type="match status" value="1"/>
</dbReference>
<dbReference type="Pfam" id="PF00181">
    <property type="entry name" value="Ribosomal_L2"/>
    <property type="match status" value="1"/>
</dbReference>
<dbReference type="Pfam" id="PF03947">
    <property type="entry name" value="Ribosomal_L2_C"/>
    <property type="match status" value="1"/>
</dbReference>
<dbReference type="PIRSF" id="PIRSF002158">
    <property type="entry name" value="Ribosomal_L2"/>
    <property type="match status" value="1"/>
</dbReference>
<dbReference type="SMART" id="SM01383">
    <property type="entry name" value="Ribosomal_L2"/>
    <property type="match status" value="1"/>
</dbReference>
<dbReference type="SMART" id="SM01382">
    <property type="entry name" value="Ribosomal_L2_C"/>
    <property type="match status" value="1"/>
</dbReference>
<dbReference type="SUPFAM" id="SSF50249">
    <property type="entry name" value="Nucleic acid-binding proteins"/>
    <property type="match status" value="1"/>
</dbReference>
<dbReference type="SUPFAM" id="SSF50104">
    <property type="entry name" value="Translation proteins SH3-like domain"/>
    <property type="match status" value="1"/>
</dbReference>
<dbReference type="PROSITE" id="PS00467">
    <property type="entry name" value="RIBOSOMAL_L2"/>
    <property type="match status" value="1"/>
</dbReference>
<protein>
    <recommendedName>
        <fullName evidence="1">Large ribosomal subunit protein uL2</fullName>
    </recommendedName>
    <alternativeName>
        <fullName evidence="3">50S ribosomal protein L2</fullName>
    </alternativeName>
</protein>
<name>RL2_ERYLH</name>
<keyword id="KW-1185">Reference proteome</keyword>
<keyword id="KW-0687">Ribonucleoprotein</keyword>
<keyword id="KW-0689">Ribosomal protein</keyword>
<keyword id="KW-0694">RNA-binding</keyword>
<keyword id="KW-0699">rRNA-binding</keyword>
<accession>Q2N9B4</accession>
<reference key="1">
    <citation type="journal article" date="2009" name="J. Bacteriol.">
        <title>Complete genome sequence of Erythrobacter litoralis HTCC2594.</title>
        <authorList>
            <person name="Oh H.M."/>
            <person name="Giovannoni S.J."/>
            <person name="Ferriera S."/>
            <person name="Johnson J."/>
            <person name="Cho J.C."/>
        </authorList>
    </citation>
    <scope>NUCLEOTIDE SEQUENCE [LARGE SCALE GENOMIC DNA]</scope>
    <source>
        <strain>HTCC2594</strain>
    </source>
</reference>
<sequence>MALKNYNPTSPARRGLILVDKSGLYKGKPVKSLTEGKRKTGGRNNKGHVTSRGIGGGHKQKYRYIDFKRRKWDVEGTVERIEYDPNRTAFIALVKYDDGELAYIIAPQRLAVGDKVIAAEKADTKPGNAMLLGQMPVGTICHNVEMKPGKGGQIARSAGAYVQLVGRDRGMVIVRLNSGEQRYLRADCMGTVGAVSNPDNQNQNLGKAGRRRWMGVKPLTRGVAKNPVDHPHGGGEGRTSGGRHPVTPWGKPTKGARTRKNKQTDKFIIRSRHAKKKR</sequence>